<comment type="function">
    <text evidence="1">NDH-1 shuttles electrons from NADH, via FMN and iron-sulfur (Fe-S) centers, to quinones in the respiratory chain. The immediate electron acceptor for the enzyme in this species is believed to be ubiquinone. Couples the redox reaction to proton translocation (for every two electrons transferred, four hydrogen ions are translocated across the cytoplasmic membrane), and thus conserves the redox energy in a proton gradient.</text>
</comment>
<comment type="catalytic activity">
    <reaction evidence="1">
        <text>a quinone + NADH + 5 H(+)(in) = a quinol + NAD(+) + 4 H(+)(out)</text>
        <dbReference type="Rhea" id="RHEA:57888"/>
        <dbReference type="ChEBI" id="CHEBI:15378"/>
        <dbReference type="ChEBI" id="CHEBI:24646"/>
        <dbReference type="ChEBI" id="CHEBI:57540"/>
        <dbReference type="ChEBI" id="CHEBI:57945"/>
        <dbReference type="ChEBI" id="CHEBI:132124"/>
    </reaction>
</comment>
<comment type="subunit">
    <text evidence="1">NDH-1 is composed of 14 different subunits. Subunits NuoA, H, J, K, L, M, N constitute the membrane sector of the complex.</text>
</comment>
<comment type="subcellular location">
    <subcellularLocation>
        <location evidence="1">Cell inner membrane</location>
        <topology evidence="1">Multi-pass membrane protein</topology>
    </subcellularLocation>
</comment>
<comment type="similarity">
    <text evidence="1">Belongs to the complex I subunit 4L family.</text>
</comment>
<feature type="chain" id="PRO_0000389914" description="NADH-quinone oxidoreductase subunit K">
    <location>
        <begin position="1"/>
        <end position="102"/>
    </location>
</feature>
<feature type="transmembrane region" description="Helical" evidence="1">
    <location>
        <begin position="6"/>
        <end position="26"/>
    </location>
</feature>
<feature type="transmembrane region" description="Helical" evidence="1">
    <location>
        <begin position="30"/>
        <end position="50"/>
    </location>
</feature>
<feature type="transmembrane region" description="Helical" evidence="1">
    <location>
        <begin position="62"/>
        <end position="82"/>
    </location>
</feature>
<evidence type="ECO:0000255" key="1">
    <source>
        <dbReference type="HAMAP-Rule" id="MF_01456"/>
    </source>
</evidence>
<name>NUOK_ACIB3</name>
<sequence>MGQIPLEHGLIVATILFALGFYGVMVRRNLLFMLMSLEIMMNAAALAFVLAGSVWAQPDGQVMFILILTLAAAEACIGLAIVLQFYHRFHHLDVDAASEMRG</sequence>
<keyword id="KW-0997">Cell inner membrane</keyword>
<keyword id="KW-1003">Cell membrane</keyword>
<keyword id="KW-0472">Membrane</keyword>
<keyword id="KW-0520">NAD</keyword>
<keyword id="KW-0874">Quinone</keyword>
<keyword id="KW-1278">Translocase</keyword>
<keyword id="KW-0812">Transmembrane</keyword>
<keyword id="KW-1133">Transmembrane helix</keyword>
<keyword id="KW-0813">Transport</keyword>
<keyword id="KW-0830">Ubiquinone</keyword>
<accession>B7GZB2</accession>
<organism>
    <name type="scientific">Acinetobacter baumannii (strain AB307-0294)</name>
    <dbReference type="NCBI Taxonomy" id="557600"/>
    <lineage>
        <taxon>Bacteria</taxon>
        <taxon>Pseudomonadati</taxon>
        <taxon>Pseudomonadota</taxon>
        <taxon>Gammaproteobacteria</taxon>
        <taxon>Moraxellales</taxon>
        <taxon>Moraxellaceae</taxon>
        <taxon>Acinetobacter</taxon>
        <taxon>Acinetobacter calcoaceticus/baumannii complex</taxon>
    </lineage>
</organism>
<reference key="1">
    <citation type="journal article" date="2008" name="J. Bacteriol.">
        <title>Comparative genome sequence analysis of multidrug-resistant Acinetobacter baumannii.</title>
        <authorList>
            <person name="Adams M.D."/>
            <person name="Goglin K."/>
            <person name="Molyneaux N."/>
            <person name="Hujer K.M."/>
            <person name="Lavender H."/>
            <person name="Jamison J.J."/>
            <person name="MacDonald I.J."/>
            <person name="Martin K.M."/>
            <person name="Russo T."/>
            <person name="Campagnari A.A."/>
            <person name="Hujer A.M."/>
            <person name="Bonomo R.A."/>
            <person name="Gill S.R."/>
        </authorList>
    </citation>
    <scope>NUCLEOTIDE SEQUENCE [LARGE SCALE GENOMIC DNA]</scope>
    <source>
        <strain>AB307-0294</strain>
    </source>
</reference>
<proteinExistence type="inferred from homology"/>
<dbReference type="EC" id="7.1.1.-" evidence="1"/>
<dbReference type="EMBL" id="CP001172">
    <property type="protein sequence ID" value="ACJ57376.1"/>
    <property type="molecule type" value="Genomic_DNA"/>
</dbReference>
<dbReference type="RefSeq" id="WP_000529822.1">
    <property type="nucleotide sequence ID" value="NZ_CP001172.1"/>
</dbReference>
<dbReference type="SMR" id="B7GZB2"/>
<dbReference type="GeneID" id="92892691"/>
<dbReference type="HOGENOM" id="CLU_144724_0_1_6"/>
<dbReference type="Proteomes" id="UP000006924">
    <property type="component" value="Chromosome"/>
</dbReference>
<dbReference type="GO" id="GO:0030964">
    <property type="term" value="C:NADH dehydrogenase complex"/>
    <property type="evidence" value="ECO:0007669"/>
    <property type="project" value="TreeGrafter"/>
</dbReference>
<dbReference type="GO" id="GO:0005886">
    <property type="term" value="C:plasma membrane"/>
    <property type="evidence" value="ECO:0007669"/>
    <property type="project" value="UniProtKB-SubCell"/>
</dbReference>
<dbReference type="GO" id="GO:0050136">
    <property type="term" value="F:NADH:ubiquinone reductase (non-electrogenic) activity"/>
    <property type="evidence" value="ECO:0007669"/>
    <property type="project" value="UniProtKB-UniRule"/>
</dbReference>
<dbReference type="GO" id="GO:0048038">
    <property type="term" value="F:quinone binding"/>
    <property type="evidence" value="ECO:0007669"/>
    <property type="project" value="UniProtKB-KW"/>
</dbReference>
<dbReference type="GO" id="GO:0042773">
    <property type="term" value="P:ATP synthesis coupled electron transport"/>
    <property type="evidence" value="ECO:0007669"/>
    <property type="project" value="InterPro"/>
</dbReference>
<dbReference type="FunFam" id="1.10.287.3510:FF:000001">
    <property type="entry name" value="NADH-quinone oxidoreductase subunit K"/>
    <property type="match status" value="1"/>
</dbReference>
<dbReference type="Gene3D" id="1.10.287.3510">
    <property type="match status" value="1"/>
</dbReference>
<dbReference type="HAMAP" id="MF_01456">
    <property type="entry name" value="NDH1_NuoK"/>
    <property type="match status" value="1"/>
</dbReference>
<dbReference type="InterPro" id="IPR001133">
    <property type="entry name" value="NADH_UbQ_OxRdtase_chain4L/K"/>
</dbReference>
<dbReference type="InterPro" id="IPR039428">
    <property type="entry name" value="NUOK/Mnh_C1-like"/>
</dbReference>
<dbReference type="NCBIfam" id="NF004319">
    <property type="entry name" value="PRK05715.1-1"/>
    <property type="match status" value="1"/>
</dbReference>
<dbReference type="NCBIfam" id="NF004320">
    <property type="entry name" value="PRK05715.1-2"/>
    <property type="match status" value="1"/>
</dbReference>
<dbReference type="PANTHER" id="PTHR11434:SF16">
    <property type="entry name" value="NADH-UBIQUINONE OXIDOREDUCTASE CHAIN 4L"/>
    <property type="match status" value="1"/>
</dbReference>
<dbReference type="PANTHER" id="PTHR11434">
    <property type="entry name" value="NADH-UBIQUINONE OXIDOREDUCTASE SUBUNIT ND4L"/>
    <property type="match status" value="1"/>
</dbReference>
<dbReference type="Pfam" id="PF00420">
    <property type="entry name" value="Oxidored_q2"/>
    <property type="match status" value="1"/>
</dbReference>
<protein>
    <recommendedName>
        <fullName evidence="1">NADH-quinone oxidoreductase subunit K</fullName>
        <ecNumber evidence="1">7.1.1.-</ecNumber>
    </recommendedName>
    <alternativeName>
        <fullName evidence="1">NADH dehydrogenase I subunit K</fullName>
    </alternativeName>
    <alternativeName>
        <fullName evidence="1">NDH-1 subunit K</fullName>
    </alternativeName>
</protein>
<gene>
    <name evidence="1" type="primary">nuoK</name>
    <name type="ordered locus">ABBFA_002853</name>
</gene>